<protein>
    <recommendedName>
        <fullName>Putative glucan endo-1,3-beta-glucosidase btgC</fullName>
        <ecNumber>3.2.1.39</ecNumber>
    </recommendedName>
    <alternativeName>
        <fullName>Endo-1,3-beta-glucanase btgC</fullName>
    </alternativeName>
    <alternativeName>
        <fullName>Laminarinase btgC</fullName>
    </alternativeName>
</protein>
<comment type="function">
    <text evidence="1">Glucanases play a role in cell expansion during growth, in cell-cell fusion during mating, and in spore release during sporulation. This enzyme may be involved in beta-glucan degradation. Active on laminarin and lichenan (By similarity).</text>
</comment>
<comment type="catalytic activity">
    <reaction>
        <text>Hydrolysis of (1-&gt;3)-beta-D-glucosidic linkages in (1-&gt;3)-beta-D-glucans.</text>
        <dbReference type="EC" id="3.2.1.39"/>
    </reaction>
</comment>
<comment type="subcellular location">
    <subcellularLocation>
        <location evidence="1">Cell membrane</location>
        <topology evidence="1">Single-pass type II membrane protein</topology>
    </subcellularLocation>
</comment>
<comment type="similarity">
    <text evidence="5">Belongs to the glycosyl hydrolase 17 family.</text>
</comment>
<comment type="caution">
    <text evidence="5">Lacks the conserved Glu residue in position 619 essential for glucanase activity. Its enzyme activity is therefore unsure.</text>
</comment>
<gene>
    <name type="primary">btgC</name>
    <name type="ORF">An07g04650</name>
</gene>
<proteinExistence type="inferred from homology"/>
<organism>
    <name type="scientific">Aspergillus niger (strain ATCC MYA-4892 / CBS 513.88 / FGSC A1513)</name>
    <dbReference type="NCBI Taxonomy" id="425011"/>
    <lineage>
        <taxon>Eukaryota</taxon>
        <taxon>Fungi</taxon>
        <taxon>Dikarya</taxon>
        <taxon>Ascomycota</taxon>
        <taxon>Pezizomycotina</taxon>
        <taxon>Eurotiomycetes</taxon>
        <taxon>Eurotiomycetidae</taxon>
        <taxon>Eurotiales</taxon>
        <taxon>Aspergillaceae</taxon>
        <taxon>Aspergillus</taxon>
        <taxon>Aspergillus subgen. Circumdati</taxon>
    </lineage>
</organism>
<reference key="1">
    <citation type="journal article" date="2007" name="Nat. Biotechnol.">
        <title>Genome sequencing and analysis of the versatile cell factory Aspergillus niger CBS 513.88.</title>
        <authorList>
            <person name="Pel H.J."/>
            <person name="de Winde J.H."/>
            <person name="Archer D.B."/>
            <person name="Dyer P.S."/>
            <person name="Hofmann G."/>
            <person name="Schaap P.J."/>
            <person name="Turner G."/>
            <person name="de Vries R.P."/>
            <person name="Albang R."/>
            <person name="Albermann K."/>
            <person name="Andersen M.R."/>
            <person name="Bendtsen J.D."/>
            <person name="Benen J.A.E."/>
            <person name="van den Berg M."/>
            <person name="Breestraat S."/>
            <person name="Caddick M.X."/>
            <person name="Contreras R."/>
            <person name="Cornell M."/>
            <person name="Coutinho P.M."/>
            <person name="Danchin E.G.J."/>
            <person name="Debets A.J.M."/>
            <person name="Dekker P."/>
            <person name="van Dijck P.W.M."/>
            <person name="van Dijk A."/>
            <person name="Dijkhuizen L."/>
            <person name="Driessen A.J.M."/>
            <person name="d'Enfert C."/>
            <person name="Geysens S."/>
            <person name="Goosen C."/>
            <person name="Groot G.S.P."/>
            <person name="de Groot P.W.J."/>
            <person name="Guillemette T."/>
            <person name="Henrissat B."/>
            <person name="Herweijer M."/>
            <person name="van den Hombergh J.P.T.W."/>
            <person name="van den Hondel C.A.M.J.J."/>
            <person name="van der Heijden R.T.J.M."/>
            <person name="van der Kaaij R.M."/>
            <person name="Klis F.M."/>
            <person name="Kools H.J."/>
            <person name="Kubicek C.P."/>
            <person name="van Kuyk P.A."/>
            <person name="Lauber J."/>
            <person name="Lu X."/>
            <person name="van der Maarel M.J.E.C."/>
            <person name="Meulenberg R."/>
            <person name="Menke H."/>
            <person name="Mortimer M.A."/>
            <person name="Nielsen J."/>
            <person name="Oliver S.G."/>
            <person name="Olsthoorn M."/>
            <person name="Pal K."/>
            <person name="van Peij N.N.M.E."/>
            <person name="Ram A.F.J."/>
            <person name="Rinas U."/>
            <person name="Roubos J.A."/>
            <person name="Sagt C.M.J."/>
            <person name="Schmoll M."/>
            <person name="Sun J."/>
            <person name="Ussery D."/>
            <person name="Varga J."/>
            <person name="Vervecken W."/>
            <person name="van de Vondervoort P.J.J."/>
            <person name="Wedler H."/>
            <person name="Woesten H.A.B."/>
            <person name="Zeng A.-P."/>
            <person name="van Ooyen A.J.J."/>
            <person name="Visser J."/>
            <person name="Stam H."/>
        </authorList>
    </citation>
    <scope>NUCLEOTIDE SEQUENCE [LARGE SCALE GENOMIC DNA]</scope>
    <source>
        <strain>ATCC MYA-4892 / CBS 513.88 / FGSC A1513</strain>
    </source>
</reference>
<sequence length="684" mass="73248">MAGVNRSFSYSRGDDALLRDDEREISPLRSAEDGLYSTSYGDVSPLSAGVQAQNRPFDRGLVSVPEGQTLERHMTSTPGMDNLGPASVGGGISGIALGVANSHNRQSGVDAFRETDVPVRNLPAERDFNTTGSDNPYIPAPPDGDIYPSSEAVRYRDSYSSHTGLGAGAPFAEHSTPGTTPSQRSFFDSPYQGVDAGPYQRHSAYSSHDYPLVINPDDIADDGDDGFPVHPKGAADYRSNANVPGTGVAGAAAAGGFLGKFRALFKREEPSPFYDSDIGGGLGGAEKAQGGRHIIGGGSRKRGWIVGLILAAVIVAAIVGGAVGGILGHQEHDGDTSSSSSSSSSSGTGSGGSDKGDGLLDKDSDEIKALMNNKNLHKVFPGVDYTPWGVQYPLCLQYPPSQNNVTRDLAVLTQLTNTIRLYGTDCNQTEMVLEAIDRLQLTNMKLWLGVWIDTNTTTTDRQISQLYKIVENANDTSIFKGAIVGNEALYRAGSDVASAETNLIGYINDVKDHFKDKNIDLPVGTSDLGDNWNAQLVSAADFVMSNIHPFFGGVEIDDAASWTWTFWQTHDTPLTAGTNKQQIISEVGWPTGGGNDCGSDNKCQNDKQGAVAGIDELNQFLSEWVCQALDNGTEYFWFEAFDEPWKVQYNTPGQEWEDKWGLMDSARNLKPGVKIPDCGGKTIT</sequence>
<dbReference type="EC" id="3.2.1.39"/>
<dbReference type="EMBL" id="AM270130">
    <property type="protein sequence ID" value="CAK39383.1"/>
    <property type="molecule type" value="Genomic_DNA"/>
</dbReference>
<dbReference type="RefSeq" id="XP_001391547.2">
    <property type="nucleotide sequence ID" value="XM_001391510.2"/>
</dbReference>
<dbReference type="SMR" id="A2QN74"/>
<dbReference type="CAZy" id="GH17">
    <property type="family name" value="Glycoside Hydrolase Family 17"/>
</dbReference>
<dbReference type="GlyCosmos" id="A2QN74">
    <property type="glycosylation" value="5 sites, No reported glycans"/>
</dbReference>
<dbReference type="EnsemblFungi" id="CAK39383">
    <property type="protein sequence ID" value="CAK39383"/>
    <property type="gene ID" value="An07g04650"/>
</dbReference>
<dbReference type="OrthoDB" id="87524at5052"/>
<dbReference type="Proteomes" id="UP000006706">
    <property type="component" value="Chromosome 4L"/>
</dbReference>
<dbReference type="GO" id="GO:0009986">
    <property type="term" value="C:cell surface"/>
    <property type="evidence" value="ECO:0007669"/>
    <property type="project" value="TreeGrafter"/>
</dbReference>
<dbReference type="GO" id="GO:0005576">
    <property type="term" value="C:extracellular region"/>
    <property type="evidence" value="ECO:0007669"/>
    <property type="project" value="TreeGrafter"/>
</dbReference>
<dbReference type="GO" id="GO:0009277">
    <property type="term" value="C:fungal-type cell wall"/>
    <property type="evidence" value="ECO:0007669"/>
    <property type="project" value="TreeGrafter"/>
</dbReference>
<dbReference type="GO" id="GO:0005886">
    <property type="term" value="C:plasma membrane"/>
    <property type="evidence" value="ECO:0007669"/>
    <property type="project" value="UniProtKB-SubCell"/>
</dbReference>
<dbReference type="GO" id="GO:0042973">
    <property type="term" value="F:glucan endo-1,3-beta-D-glucosidase activity"/>
    <property type="evidence" value="ECO:0007669"/>
    <property type="project" value="UniProtKB-EC"/>
</dbReference>
<dbReference type="GO" id="GO:0071555">
    <property type="term" value="P:cell wall organization"/>
    <property type="evidence" value="ECO:0007669"/>
    <property type="project" value="UniProtKB-KW"/>
</dbReference>
<dbReference type="GO" id="GO:0000272">
    <property type="term" value="P:polysaccharide catabolic process"/>
    <property type="evidence" value="ECO:0007669"/>
    <property type="project" value="UniProtKB-KW"/>
</dbReference>
<dbReference type="FunFam" id="3.20.20.80:FF:000151">
    <property type="entry name" value="Glucan endo-1,3-beta-glucosidase btgC"/>
    <property type="match status" value="1"/>
</dbReference>
<dbReference type="Gene3D" id="3.20.20.80">
    <property type="entry name" value="Glycosidases"/>
    <property type="match status" value="1"/>
</dbReference>
<dbReference type="InterPro" id="IPR050732">
    <property type="entry name" value="Beta-glucan_modifiers"/>
</dbReference>
<dbReference type="InterPro" id="IPR017853">
    <property type="entry name" value="Glycoside_hydrolase_SF"/>
</dbReference>
<dbReference type="PANTHER" id="PTHR16631">
    <property type="entry name" value="GLUCAN 1,3-BETA-GLUCOSIDASE"/>
    <property type="match status" value="1"/>
</dbReference>
<dbReference type="PANTHER" id="PTHR16631:SF17">
    <property type="entry name" value="GLUCAN ENDO-1,3-BETA-GLUCOSIDASE BTGC"/>
    <property type="match status" value="1"/>
</dbReference>
<dbReference type="SUPFAM" id="SSF51445">
    <property type="entry name" value="(Trans)glycosidases"/>
    <property type="match status" value="1"/>
</dbReference>
<accession>A2QN74</accession>
<name>BTGC_ASPNC</name>
<feature type="chain" id="PRO_0000395125" description="Putative glucan endo-1,3-beta-glucosidase btgC">
    <location>
        <begin position="1"/>
        <end position="684"/>
    </location>
</feature>
<feature type="topological domain" description="Cytoplasmic" evidence="3">
    <location>
        <begin position="1"/>
        <end position="302"/>
    </location>
</feature>
<feature type="transmembrane region" description="Helical; Signal-anchor for type II membrane protein" evidence="3">
    <location>
        <begin position="303"/>
        <end position="323"/>
    </location>
</feature>
<feature type="topological domain" description="Extracellular" evidence="3">
    <location>
        <begin position="324"/>
        <end position="684"/>
    </location>
</feature>
<feature type="region of interest" description="Disordered" evidence="4">
    <location>
        <begin position="1"/>
        <end position="38"/>
    </location>
</feature>
<feature type="region of interest" description="Disordered" evidence="4">
    <location>
        <begin position="124"/>
        <end position="143"/>
    </location>
</feature>
<feature type="region of interest" description="Disordered" evidence="4">
    <location>
        <begin position="157"/>
        <end position="182"/>
    </location>
</feature>
<feature type="region of interest" description="Disordered" evidence="4">
    <location>
        <begin position="330"/>
        <end position="358"/>
    </location>
</feature>
<feature type="compositionally biased region" description="Polar residues" evidence="4">
    <location>
        <begin position="1"/>
        <end position="10"/>
    </location>
</feature>
<feature type="compositionally biased region" description="Basic and acidic residues" evidence="4">
    <location>
        <begin position="12"/>
        <end position="32"/>
    </location>
</feature>
<feature type="compositionally biased region" description="Low complexity" evidence="4">
    <location>
        <begin position="336"/>
        <end position="347"/>
    </location>
</feature>
<feature type="active site" description="Proton donor" evidence="2">
    <location>
        <position position="487"/>
    </location>
</feature>
<feature type="active site" description="Nucleophile" evidence="2">
    <location>
        <position position="586"/>
    </location>
</feature>
<feature type="glycosylation site" description="N-linked (GlcNAc...) asparagine" evidence="3">
    <location>
        <position position="404"/>
    </location>
</feature>
<feature type="glycosylation site" description="N-linked (GlcNAc...) asparagine" evidence="3">
    <location>
        <position position="427"/>
    </location>
</feature>
<feature type="glycosylation site" description="N-linked (GlcNAc...) asparagine" evidence="3">
    <location>
        <position position="455"/>
    </location>
</feature>
<feature type="glycosylation site" description="N-linked (GlcNAc...) asparagine" evidence="3">
    <location>
        <position position="474"/>
    </location>
</feature>
<feature type="glycosylation site" description="N-linked (GlcNAc...) asparagine" evidence="3">
    <location>
        <position position="631"/>
    </location>
</feature>
<evidence type="ECO:0000250" key="1"/>
<evidence type="ECO:0000250" key="2">
    <source>
        <dbReference type="UniProtKB" id="O22317"/>
    </source>
</evidence>
<evidence type="ECO:0000255" key="3"/>
<evidence type="ECO:0000256" key="4">
    <source>
        <dbReference type="SAM" id="MobiDB-lite"/>
    </source>
</evidence>
<evidence type="ECO:0000305" key="5"/>
<keyword id="KW-0119">Carbohydrate metabolism</keyword>
<keyword id="KW-1003">Cell membrane</keyword>
<keyword id="KW-0961">Cell wall biogenesis/degradation</keyword>
<keyword id="KW-0325">Glycoprotein</keyword>
<keyword id="KW-0378">Hydrolase</keyword>
<keyword id="KW-0472">Membrane</keyword>
<keyword id="KW-0624">Polysaccharide degradation</keyword>
<keyword id="KW-1185">Reference proteome</keyword>
<keyword id="KW-0735">Signal-anchor</keyword>
<keyword id="KW-0812">Transmembrane</keyword>
<keyword id="KW-1133">Transmembrane helix</keyword>